<feature type="peptide" id="PRO_0000343197" description="Bradykinin-potentiating peptide S">
    <location>
        <begin position="1"/>
        <end position="11"/>
    </location>
</feature>
<feature type="modified residue" description="Pyrrolidone carboxylic acid" evidence="1">
    <location>
        <position position="1"/>
    </location>
</feature>
<protein>
    <recommendedName>
        <fullName>Bradykinin-potentiating peptide S</fullName>
        <shortName>BPP-S</shortName>
    </recommendedName>
</protein>
<organism>
    <name type="scientific">Lycosa erythrognatha</name>
    <name type="common">Wolf spider</name>
    <name type="synonym">Scaptocosa raptoria</name>
    <dbReference type="NCBI Taxonomy" id="332789"/>
    <lineage>
        <taxon>Eukaryota</taxon>
        <taxon>Metazoa</taxon>
        <taxon>Ecdysozoa</taxon>
        <taxon>Arthropoda</taxon>
        <taxon>Chelicerata</taxon>
        <taxon>Arachnida</taxon>
        <taxon>Araneae</taxon>
        <taxon>Araneomorphae</taxon>
        <taxon>Entelegynae</taxon>
        <taxon>Lycosoidea</taxon>
        <taxon>Lycosidae</taxon>
        <taxon>Lycosa</taxon>
    </lineage>
</organism>
<name>BPPS_LYCER</name>
<dbReference type="ArachnoServer" id="AS000001">
    <property type="toxin name" value="Bradykinin-1-Lycosa erythrognatha"/>
</dbReference>
<dbReference type="GO" id="GO:0005576">
    <property type="term" value="C:extracellular region"/>
    <property type="evidence" value="ECO:0007669"/>
    <property type="project" value="UniProtKB-SubCell"/>
</dbReference>
<dbReference type="GO" id="GO:0030414">
    <property type="term" value="F:peptidase inhibitor activity"/>
    <property type="evidence" value="ECO:0007669"/>
    <property type="project" value="UniProtKB-KW"/>
</dbReference>
<dbReference type="GO" id="GO:0008217">
    <property type="term" value="P:regulation of blood pressure"/>
    <property type="evidence" value="ECO:0007669"/>
    <property type="project" value="UniProtKB-KW"/>
</dbReference>
<sequence length="11" mass="1208">QAPWPDTISPP</sequence>
<reference key="1">
    <citation type="journal article" date="1996" name="Toxicon">
        <title>Isolation and characterization of a bradykinin potentiating peptide (BPP-S) isolated from Scaptocosa raptoria venom.</title>
        <authorList>
            <person name="Ferreira L.A.F."/>
            <person name="Alves W.E."/>
            <person name="Lucas M.S."/>
            <person name="Habermehl G.G."/>
        </authorList>
    </citation>
    <scope>PROTEIN SEQUENCE</scope>
    <scope>FUNCTION</scope>
    <scope>SUBCELLULAR LOCATION</scope>
    <scope>TISSUE SPECIFICITY</scope>
    <scope>PYROGLUTAMATE FORMATION AT GLN-1</scope>
    <source>
        <tissue>Venom</tissue>
    </source>
</reference>
<accession>P0C7S8</accession>
<comment type="function">
    <text evidence="1">This peptide potentiates the effects of bradykinin on smooth muscle, and inhibits the angiotensin-converting enzyme (ACE) in vitro.</text>
</comment>
<comment type="subcellular location">
    <subcellularLocation>
        <location evidence="1">Secreted</location>
    </subcellularLocation>
</comment>
<comment type="tissue specificity">
    <text evidence="1">Expressed by the venom gland.</text>
</comment>
<comment type="similarity">
    <text evidence="2">Belongs to the bradykinin-potentiating peptide family.</text>
</comment>
<proteinExistence type="evidence at protein level"/>
<keyword id="KW-0903">Direct protein sequencing</keyword>
<keyword id="KW-0382">Hypotensive agent</keyword>
<keyword id="KW-0481">Metalloenzyme inhibitor</keyword>
<keyword id="KW-0483">Metalloprotease inhibitor</keyword>
<keyword id="KW-0646">Protease inhibitor</keyword>
<keyword id="KW-0873">Pyrrolidone carboxylic acid</keyword>
<keyword id="KW-0964">Secreted</keyword>
<evidence type="ECO:0000269" key="1">
    <source>
    </source>
</evidence>
<evidence type="ECO:0000305" key="2"/>